<comment type="function">
    <text evidence="1 3 5">Component of the ESCRT-I complex, a regulator of vesicular trafficking process. Binds to ubiquitinated cargo proteins and is required for the sorting of endocytic ubiquitinated cargos into multivesicular bodies (MVBs). Mediates the association to the ESCRT-0 complex (By similarity).</text>
</comment>
<comment type="subunit">
    <text evidence="1">Component of the ESCRT-I complex (endosomal sorting complex required for transport I).</text>
</comment>
<comment type="subcellular location">
    <subcellularLocation>
        <location evidence="4">Cytoplasm</location>
    </subcellularLocation>
    <subcellularLocation>
        <location evidence="4">Endosome</location>
    </subcellularLocation>
    <subcellularLocation>
        <location evidence="1">Late endosome membrane</location>
        <topology evidence="1">Peripheral membrane protein</topology>
    </subcellularLocation>
</comment>
<accession>Q7Z992</accession>
<organism>
    <name type="scientific">Schizosaccharomyces pombe (strain 972 / ATCC 24843)</name>
    <name type="common">Fission yeast</name>
    <dbReference type="NCBI Taxonomy" id="284812"/>
    <lineage>
        <taxon>Eukaryota</taxon>
        <taxon>Fungi</taxon>
        <taxon>Dikarya</taxon>
        <taxon>Ascomycota</taxon>
        <taxon>Taphrinomycotina</taxon>
        <taxon>Schizosaccharomycetes</taxon>
        <taxon>Schizosaccharomycetales</taxon>
        <taxon>Schizosaccharomycetaceae</taxon>
        <taxon>Schizosaccharomyces</taxon>
    </lineage>
</organism>
<gene>
    <name type="primary">sst6</name>
    <name type="synonym">cps23</name>
    <name type="synonym">vps23</name>
    <name type="ORF">SPAC11H11.01</name>
</gene>
<evidence type="ECO:0000250" key="1"/>
<evidence type="ECO:0000255" key="2">
    <source>
        <dbReference type="PROSITE-ProRule" id="PRU00644"/>
    </source>
</evidence>
<evidence type="ECO:0000269" key="3">
    <source>
    </source>
</evidence>
<evidence type="ECO:0000269" key="4">
    <source>
    </source>
</evidence>
<evidence type="ECO:0000269" key="5">
    <source>
    </source>
</evidence>
<sequence length="487" mass="55968">MSDHAINEHPSRILNTIEKIRFWKNGLAEELELLFRKQCEDTFTLQAINIEVDTQDENKIEEVRIYLSTPAFDKTILTSACITVRSYYPSQPPIVQLLDEKGGKHKYTSLLLQLWKNERSVFNIYRLVQALIKQDFEREHTSPPELPTKLVNTIEKLKVKEENEAPPVIPAKPFSSSSEQHFRKVPALPSKLPPKPLKITANSSLGQETNSNSSSFQSTLFSLNTAPFSATSQQLVHDSVSLRRPSSNIPAQKPIPPKPEQNEIIITKDTPSLKDKYSKPALLPQKPKVSKGQIVQQVSVFSTGKKIESQSLLNLIDTDIETPLKGSSELLYSEDFKPNVDPVKIQQILHKQNKIIEEKWISQIRISKNLEVKQRLLDQERHALETLAKNIENNRFILGKRRRKAREALQKLDNLKDLSVQELFIIPSERELKYYELKRKDEKLDEGIRALNQALHHESIMPASWLKGIKLLARQQFLIRDEMLQYS</sequence>
<protein>
    <recommendedName>
        <fullName>ESCRT-I complex subunit vps23</fullName>
    </recommendedName>
    <alternativeName>
        <fullName>Suppressor of ste12 deletion protein 6</fullName>
    </alternativeName>
</protein>
<name>SST6_SCHPO</name>
<proteinExistence type="inferred from homology"/>
<feature type="chain" id="PRO_0000353847" description="ESCRT-I complex subunit vps23">
    <location>
        <begin position="1"/>
        <end position="487"/>
    </location>
</feature>
<feature type="domain" description="SB" evidence="2">
    <location>
        <begin position="428"/>
        <end position="487"/>
    </location>
</feature>
<reference key="1">
    <citation type="journal article" date="2002" name="Nature">
        <title>The genome sequence of Schizosaccharomyces pombe.</title>
        <authorList>
            <person name="Wood V."/>
            <person name="Gwilliam R."/>
            <person name="Rajandream M.A."/>
            <person name="Lyne M.H."/>
            <person name="Lyne R."/>
            <person name="Stewart A."/>
            <person name="Sgouros J.G."/>
            <person name="Peat N."/>
            <person name="Hayles J."/>
            <person name="Baker S.G."/>
            <person name="Basham D."/>
            <person name="Bowman S."/>
            <person name="Brooks K."/>
            <person name="Brown D."/>
            <person name="Brown S."/>
            <person name="Chillingworth T."/>
            <person name="Churcher C.M."/>
            <person name="Collins M."/>
            <person name="Connor R."/>
            <person name="Cronin A."/>
            <person name="Davis P."/>
            <person name="Feltwell T."/>
            <person name="Fraser A."/>
            <person name="Gentles S."/>
            <person name="Goble A."/>
            <person name="Hamlin N."/>
            <person name="Harris D.E."/>
            <person name="Hidalgo J."/>
            <person name="Hodgson G."/>
            <person name="Holroyd S."/>
            <person name="Hornsby T."/>
            <person name="Howarth S."/>
            <person name="Huckle E.J."/>
            <person name="Hunt S."/>
            <person name="Jagels K."/>
            <person name="James K.D."/>
            <person name="Jones L."/>
            <person name="Jones M."/>
            <person name="Leather S."/>
            <person name="McDonald S."/>
            <person name="McLean J."/>
            <person name="Mooney P."/>
            <person name="Moule S."/>
            <person name="Mungall K.L."/>
            <person name="Murphy L.D."/>
            <person name="Niblett D."/>
            <person name="Odell C."/>
            <person name="Oliver K."/>
            <person name="O'Neil S."/>
            <person name="Pearson D."/>
            <person name="Quail M.A."/>
            <person name="Rabbinowitsch E."/>
            <person name="Rutherford K.M."/>
            <person name="Rutter S."/>
            <person name="Saunders D."/>
            <person name="Seeger K."/>
            <person name="Sharp S."/>
            <person name="Skelton J."/>
            <person name="Simmonds M.N."/>
            <person name="Squares R."/>
            <person name="Squares S."/>
            <person name="Stevens K."/>
            <person name="Taylor K."/>
            <person name="Taylor R.G."/>
            <person name="Tivey A."/>
            <person name="Walsh S.V."/>
            <person name="Warren T."/>
            <person name="Whitehead S."/>
            <person name="Woodward J.R."/>
            <person name="Volckaert G."/>
            <person name="Aert R."/>
            <person name="Robben J."/>
            <person name="Grymonprez B."/>
            <person name="Weltjens I."/>
            <person name="Vanstreels E."/>
            <person name="Rieger M."/>
            <person name="Schaefer M."/>
            <person name="Mueller-Auer S."/>
            <person name="Gabel C."/>
            <person name="Fuchs M."/>
            <person name="Duesterhoeft A."/>
            <person name="Fritzc C."/>
            <person name="Holzer E."/>
            <person name="Moestl D."/>
            <person name="Hilbert H."/>
            <person name="Borzym K."/>
            <person name="Langer I."/>
            <person name="Beck A."/>
            <person name="Lehrach H."/>
            <person name="Reinhardt R."/>
            <person name="Pohl T.M."/>
            <person name="Eger P."/>
            <person name="Zimmermann W."/>
            <person name="Wedler H."/>
            <person name="Wambutt R."/>
            <person name="Purnelle B."/>
            <person name="Goffeau A."/>
            <person name="Cadieu E."/>
            <person name="Dreano S."/>
            <person name="Gloux S."/>
            <person name="Lelaure V."/>
            <person name="Mottier S."/>
            <person name="Galibert F."/>
            <person name="Aves S.J."/>
            <person name="Xiang Z."/>
            <person name="Hunt C."/>
            <person name="Moore K."/>
            <person name="Hurst S.M."/>
            <person name="Lucas M."/>
            <person name="Rochet M."/>
            <person name="Gaillardin C."/>
            <person name="Tallada V.A."/>
            <person name="Garzon A."/>
            <person name="Thode G."/>
            <person name="Daga R.R."/>
            <person name="Cruzado L."/>
            <person name="Jimenez J."/>
            <person name="Sanchez M."/>
            <person name="del Rey F."/>
            <person name="Benito J."/>
            <person name="Dominguez A."/>
            <person name="Revuelta J.L."/>
            <person name="Moreno S."/>
            <person name="Armstrong J."/>
            <person name="Forsburg S.L."/>
            <person name="Cerutti L."/>
            <person name="Lowe T."/>
            <person name="McCombie W.R."/>
            <person name="Paulsen I."/>
            <person name="Potashkin J."/>
            <person name="Shpakovski G.V."/>
            <person name="Ussery D."/>
            <person name="Barrell B.G."/>
            <person name="Nurse P."/>
        </authorList>
    </citation>
    <scope>NUCLEOTIDE SEQUENCE [LARGE SCALE GENOMIC DNA]</scope>
    <source>
        <strain>972 / ATCC 24843</strain>
    </source>
</reference>
<reference key="2">
    <citation type="journal article" date="2003" name="Biosci. Biotechnol. Biochem.">
        <title>Isolation of suppressor mutants of phosphatidylinositol 3-phosphate 5-kinase deficient cells in Schizosaccharomyces pombe.</title>
        <authorList>
            <person name="Onishi M."/>
            <person name="Nakamura Y."/>
            <person name="Koga T."/>
            <person name="Takegawa K."/>
            <person name="Fukui Y."/>
        </authorList>
    </citation>
    <scope>FUNCTION</scope>
</reference>
<reference key="3">
    <citation type="journal article" date="2006" name="Nat. Biotechnol.">
        <title>ORFeome cloning and global analysis of protein localization in the fission yeast Schizosaccharomyces pombe.</title>
        <authorList>
            <person name="Matsuyama A."/>
            <person name="Arai R."/>
            <person name="Yashiroda Y."/>
            <person name="Shirai A."/>
            <person name="Kamata A."/>
            <person name="Sekido S."/>
            <person name="Kobayashi Y."/>
            <person name="Hashimoto A."/>
            <person name="Hamamoto M."/>
            <person name="Hiraoka Y."/>
            <person name="Horinouchi S."/>
            <person name="Yoshida M."/>
        </authorList>
    </citation>
    <scope>SUBCELLULAR LOCATION [LARGE SCALE ANALYSIS]</scope>
</reference>
<reference key="4">
    <citation type="journal article" date="2007" name="Microbiology">
        <title>Essential roles of class E Vps proteins for sorting into multivesicular bodies in Schizosaccharomyces pombe.</title>
        <authorList>
            <person name="Iwaki T."/>
            <person name="Onishi M."/>
            <person name="Ikeuchi M."/>
            <person name="Kita A."/>
            <person name="Sugiura R."/>
            <person name="Giga-Hama Y."/>
            <person name="Fukui Y."/>
            <person name="Takegawa K."/>
        </authorList>
    </citation>
    <scope>FUNCTION</scope>
</reference>
<dbReference type="EMBL" id="CU329670">
    <property type="protein sequence ID" value="CAD99129.2"/>
    <property type="molecule type" value="Genomic_DNA"/>
</dbReference>
<dbReference type="RefSeq" id="NP_001018287.1">
    <property type="nucleotide sequence ID" value="NM_001020147.2"/>
</dbReference>
<dbReference type="SMR" id="Q7Z992"/>
<dbReference type="BioGRID" id="280537">
    <property type="interactions" value="27"/>
</dbReference>
<dbReference type="STRING" id="284812.Q7Z992"/>
<dbReference type="iPTMnet" id="Q7Z992"/>
<dbReference type="PaxDb" id="4896-SPAC11H11.01.1"/>
<dbReference type="EnsemblFungi" id="SPAC11H11.01.1">
    <property type="protein sequence ID" value="SPAC11H11.01.1:pep"/>
    <property type="gene ID" value="SPAC11H11.01"/>
</dbReference>
<dbReference type="GeneID" id="3361461"/>
<dbReference type="KEGG" id="spo:3361461"/>
<dbReference type="PomBase" id="SPAC11H11.01">
    <property type="gene designation" value="sst6"/>
</dbReference>
<dbReference type="VEuPathDB" id="FungiDB:SPAC11H11.01"/>
<dbReference type="HOGENOM" id="CLU_607150_0_0_1"/>
<dbReference type="InParanoid" id="Q7Z992"/>
<dbReference type="OMA" id="WISQIRI"/>
<dbReference type="PRO" id="PR:Q7Z992"/>
<dbReference type="Proteomes" id="UP000002485">
    <property type="component" value="Chromosome I"/>
</dbReference>
<dbReference type="GO" id="GO:0000813">
    <property type="term" value="C:ESCRT I complex"/>
    <property type="evidence" value="ECO:0000266"/>
    <property type="project" value="PomBase"/>
</dbReference>
<dbReference type="GO" id="GO:0031902">
    <property type="term" value="C:late endosome membrane"/>
    <property type="evidence" value="ECO:0007669"/>
    <property type="project" value="UniProtKB-SubCell"/>
</dbReference>
<dbReference type="GO" id="GO:0005635">
    <property type="term" value="C:nuclear envelope"/>
    <property type="evidence" value="ECO:0007005"/>
    <property type="project" value="PomBase"/>
</dbReference>
<dbReference type="GO" id="GO:0005634">
    <property type="term" value="C:nucleus"/>
    <property type="evidence" value="ECO:0007005"/>
    <property type="project" value="PomBase"/>
</dbReference>
<dbReference type="GO" id="GO:0120113">
    <property type="term" value="P:cytoplasm to vacuole targeting by the NVT pathway"/>
    <property type="evidence" value="ECO:0000315"/>
    <property type="project" value="PomBase"/>
</dbReference>
<dbReference type="GO" id="GO:0006897">
    <property type="term" value="P:endocytosis"/>
    <property type="evidence" value="ECO:0000315"/>
    <property type="project" value="PomBase"/>
</dbReference>
<dbReference type="GO" id="GO:0045324">
    <property type="term" value="P:late endosome to vacuole transport"/>
    <property type="evidence" value="ECO:0000315"/>
    <property type="project" value="PomBase"/>
</dbReference>
<dbReference type="GO" id="GO:0043328">
    <property type="term" value="P:protein transport to vacuole involved in ubiquitin-dependent protein catabolic process via the multivesicular body sorting pathway"/>
    <property type="evidence" value="ECO:0000315"/>
    <property type="project" value="PomBase"/>
</dbReference>
<dbReference type="Gene3D" id="6.10.140.820">
    <property type="match status" value="1"/>
</dbReference>
<dbReference type="InterPro" id="IPR037202">
    <property type="entry name" value="ESCRT_assembly_dom"/>
</dbReference>
<dbReference type="InterPro" id="IPR017916">
    <property type="entry name" value="SB_dom"/>
</dbReference>
<dbReference type="Pfam" id="PF09454">
    <property type="entry name" value="Vps23_core"/>
    <property type="match status" value="1"/>
</dbReference>
<dbReference type="SUPFAM" id="SSF140111">
    <property type="entry name" value="Endosomal sorting complex assembly domain"/>
    <property type="match status" value="1"/>
</dbReference>
<dbReference type="PROSITE" id="PS51312">
    <property type="entry name" value="SB"/>
    <property type="match status" value="1"/>
</dbReference>
<keyword id="KW-0963">Cytoplasm</keyword>
<keyword id="KW-0967">Endosome</keyword>
<keyword id="KW-0472">Membrane</keyword>
<keyword id="KW-0653">Protein transport</keyword>
<keyword id="KW-1185">Reference proteome</keyword>
<keyword id="KW-0813">Transport</keyword>